<organism>
    <name type="scientific">Mus musculus</name>
    <name type="common">Mouse</name>
    <dbReference type="NCBI Taxonomy" id="10090"/>
    <lineage>
        <taxon>Eukaryota</taxon>
        <taxon>Metazoa</taxon>
        <taxon>Chordata</taxon>
        <taxon>Craniata</taxon>
        <taxon>Vertebrata</taxon>
        <taxon>Euteleostomi</taxon>
        <taxon>Mammalia</taxon>
        <taxon>Eutheria</taxon>
        <taxon>Euarchontoglires</taxon>
        <taxon>Glires</taxon>
        <taxon>Rodentia</taxon>
        <taxon>Myomorpha</taxon>
        <taxon>Muroidea</taxon>
        <taxon>Muridae</taxon>
        <taxon>Murinae</taxon>
        <taxon>Mus</taxon>
        <taxon>Mus</taxon>
    </lineage>
</organism>
<protein>
    <recommendedName>
        <fullName>Genetic suppressor element 1</fullName>
    </recommendedName>
</protein>
<sequence>MKGMSHEPKSPSIGMLSTATRTTATVNPLTPSPLNGALVPTGSPATSSTLSAQAAPSSSFAAALRKLAKQAEEPRGSSLSSESSPVSSPATNHSSPASTPKRVPMGPIIVPPGGHSVPSTPPVVTIAPTKTVNGVWRSESRQDSGSRGSSSGRERLLVEPPLAQEKAAGPAIPSHLLSTPYPFGLSPGSVVQDSRFQPLNLQRPVHHVVPPSTVTEDYLRSFRPYHTAEDLRMSSLPPLGLDPATAAAYYHPSYLAPHPFPHPAFRMDDSYCLSALRSPFYPIPTPGSLPPLHPSAMHLHLSGVRYPPELSHSSLAALHSERMSSLSAERLQMDEELRREREREREREREADREREKEREREQREKEREKELEREREKERERELERQREQRAREKELLAAKALEPTTFLPVAELHGLRGHSTEERPKPSEQLTPTRAEKLKDVGLQAPKPVQHPLHPVPAPHHTVPSLISSHGIFSLPGSSATTALLIQRTNEEEKWLARQRRLRQEKEDRQSQVSEFRQQVLEQHLDLGRPLVPTEAEHRPESTRPGTNRHEQGSREPPQHFGGPPPLISPKPQQHTVPTALWNPVSLMDNALETRRAESHSLHSHPTAFEPSRQAAVPLVKVERVYCSEKAEEPRKREATPLDKYQPPPPPPPPREAGSLEPQTFPHGPGPFLTELEKSTQTILGQQRPSLSQATSFGELSGPLKPGSPYCHPTARGPDPAYIYDEFLQQRRKLVSKLDLEERRRREAQEKGYYYDLDDSYDESDEEEVRAHLRCVAEQPPLKLDTSSEKLEFLQLFGLTTQQQKEELVAQKRRKRRRMLRERSPSPPAVQCKRQTPSPRLALSTRYSPDEMNNSPNFEEKRKFLTFFNLTHISAEKRKDKERLVEMLRAMKQRALSAADSVTNSSRDSPPVSLSEPATQPAPLETDQPVGVPASLSDVPKTTETGRLEQLRPQELLRVQEPAPPSGEKARLSEAPGGKKSLSMLHYLRGAAPKDIPVPLSHSINGKSKPWEPFVAEEFAHQFHESVLQSTQKALQKHKGNSALLSAEQSHKVDTAIHYNIPELQSSSRVPLPQHNGQQEPPMGRKGPPMQEADQDSEEDSEEDSEEEAEEAPRRQWQGIEAIFEAYQEHIEEQNLERQVLQTQCRRLEAQNYSLSLTAEQLSHSMAELRSQKQKMVSERERLQAELDHLRKCLALPTMHWPRGYFKGYPR</sequence>
<accession>Q3U3C9</accession>
<accession>Q3UWZ5</accession>
<accession>Q80U67</accession>
<accession>Q80XR0</accession>
<accession>Q8CCF2</accession>
<reference key="1">
    <citation type="journal article" date="2005" name="Science">
        <title>The transcriptional landscape of the mammalian genome.</title>
        <authorList>
            <person name="Carninci P."/>
            <person name="Kasukawa T."/>
            <person name="Katayama S."/>
            <person name="Gough J."/>
            <person name="Frith M.C."/>
            <person name="Maeda N."/>
            <person name="Oyama R."/>
            <person name="Ravasi T."/>
            <person name="Lenhard B."/>
            <person name="Wells C."/>
            <person name="Kodzius R."/>
            <person name="Shimokawa K."/>
            <person name="Bajic V.B."/>
            <person name="Brenner S.E."/>
            <person name="Batalov S."/>
            <person name="Forrest A.R."/>
            <person name="Zavolan M."/>
            <person name="Davis M.J."/>
            <person name="Wilming L.G."/>
            <person name="Aidinis V."/>
            <person name="Allen J.E."/>
            <person name="Ambesi-Impiombato A."/>
            <person name="Apweiler R."/>
            <person name="Aturaliya R.N."/>
            <person name="Bailey T.L."/>
            <person name="Bansal M."/>
            <person name="Baxter L."/>
            <person name="Beisel K.W."/>
            <person name="Bersano T."/>
            <person name="Bono H."/>
            <person name="Chalk A.M."/>
            <person name="Chiu K.P."/>
            <person name="Choudhary V."/>
            <person name="Christoffels A."/>
            <person name="Clutterbuck D.R."/>
            <person name="Crowe M.L."/>
            <person name="Dalla E."/>
            <person name="Dalrymple B.P."/>
            <person name="de Bono B."/>
            <person name="Della Gatta G."/>
            <person name="di Bernardo D."/>
            <person name="Down T."/>
            <person name="Engstrom P."/>
            <person name="Fagiolini M."/>
            <person name="Faulkner G."/>
            <person name="Fletcher C.F."/>
            <person name="Fukushima T."/>
            <person name="Furuno M."/>
            <person name="Futaki S."/>
            <person name="Gariboldi M."/>
            <person name="Georgii-Hemming P."/>
            <person name="Gingeras T.R."/>
            <person name="Gojobori T."/>
            <person name="Green R.E."/>
            <person name="Gustincich S."/>
            <person name="Harbers M."/>
            <person name="Hayashi Y."/>
            <person name="Hensch T.K."/>
            <person name="Hirokawa N."/>
            <person name="Hill D."/>
            <person name="Huminiecki L."/>
            <person name="Iacono M."/>
            <person name="Ikeo K."/>
            <person name="Iwama A."/>
            <person name="Ishikawa T."/>
            <person name="Jakt M."/>
            <person name="Kanapin A."/>
            <person name="Katoh M."/>
            <person name="Kawasawa Y."/>
            <person name="Kelso J."/>
            <person name="Kitamura H."/>
            <person name="Kitano H."/>
            <person name="Kollias G."/>
            <person name="Krishnan S.P."/>
            <person name="Kruger A."/>
            <person name="Kummerfeld S.K."/>
            <person name="Kurochkin I.V."/>
            <person name="Lareau L.F."/>
            <person name="Lazarevic D."/>
            <person name="Lipovich L."/>
            <person name="Liu J."/>
            <person name="Liuni S."/>
            <person name="McWilliam S."/>
            <person name="Madan Babu M."/>
            <person name="Madera M."/>
            <person name="Marchionni L."/>
            <person name="Matsuda H."/>
            <person name="Matsuzawa S."/>
            <person name="Miki H."/>
            <person name="Mignone F."/>
            <person name="Miyake S."/>
            <person name="Morris K."/>
            <person name="Mottagui-Tabar S."/>
            <person name="Mulder N."/>
            <person name="Nakano N."/>
            <person name="Nakauchi H."/>
            <person name="Ng P."/>
            <person name="Nilsson R."/>
            <person name="Nishiguchi S."/>
            <person name="Nishikawa S."/>
            <person name="Nori F."/>
            <person name="Ohara O."/>
            <person name="Okazaki Y."/>
            <person name="Orlando V."/>
            <person name="Pang K.C."/>
            <person name="Pavan W.J."/>
            <person name="Pavesi G."/>
            <person name="Pesole G."/>
            <person name="Petrovsky N."/>
            <person name="Piazza S."/>
            <person name="Reed J."/>
            <person name="Reid J.F."/>
            <person name="Ring B.Z."/>
            <person name="Ringwald M."/>
            <person name="Rost B."/>
            <person name="Ruan Y."/>
            <person name="Salzberg S.L."/>
            <person name="Sandelin A."/>
            <person name="Schneider C."/>
            <person name="Schoenbach C."/>
            <person name="Sekiguchi K."/>
            <person name="Semple C.A."/>
            <person name="Seno S."/>
            <person name="Sessa L."/>
            <person name="Sheng Y."/>
            <person name="Shibata Y."/>
            <person name="Shimada H."/>
            <person name="Shimada K."/>
            <person name="Silva D."/>
            <person name="Sinclair B."/>
            <person name="Sperling S."/>
            <person name="Stupka E."/>
            <person name="Sugiura K."/>
            <person name="Sultana R."/>
            <person name="Takenaka Y."/>
            <person name="Taki K."/>
            <person name="Tammoja K."/>
            <person name="Tan S.L."/>
            <person name="Tang S."/>
            <person name="Taylor M.S."/>
            <person name="Tegner J."/>
            <person name="Teichmann S.A."/>
            <person name="Ueda H.R."/>
            <person name="van Nimwegen E."/>
            <person name="Verardo R."/>
            <person name="Wei C.L."/>
            <person name="Yagi K."/>
            <person name="Yamanishi H."/>
            <person name="Zabarovsky E."/>
            <person name="Zhu S."/>
            <person name="Zimmer A."/>
            <person name="Hide W."/>
            <person name="Bult C."/>
            <person name="Grimmond S.M."/>
            <person name="Teasdale R.D."/>
            <person name="Liu E.T."/>
            <person name="Brusic V."/>
            <person name="Quackenbush J."/>
            <person name="Wahlestedt C."/>
            <person name="Mattick J.S."/>
            <person name="Hume D.A."/>
            <person name="Kai C."/>
            <person name="Sasaki D."/>
            <person name="Tomaru Y."/>
            <person name="Fukuda S."/>
            <person name="Kanamori-Katayama M."/>
            <person name="Suzuki M."/>
            <person name="Aoki J."/>
            <person name="Arakawa T."/>
            <person name="Iida J."/>
            <person name="Imamura K."/>
            <person name="Itoh M."/>
            <person name="Kato T."/>
            <person name="Kawaji H."/>
            <person name="Kawagashira N."/>
            <person name="Kawashima T."/>
            <person name="Kojima M."/>
            <person name="Kondo S."/>
            <person name="Konno H."/>
            <person name="Nakano K."/>
            <person name="Ninomiya N."/>
            <person name="Nishio T."/>
            <person name="Okada M."/>
            <person name="Plessy C."/>
            <person name="Shibata K."/>
            <person name="Shiraki T."/>
            <person name="Suzuki S."/>
            <person name="Tagami M."/>
            <person name="Waki K."/>
            <person name="Watahiki A."/>
            <person name="Okamura-Oho Y."/>
            <person name="Suzuki H."/>
            <person name="Kawai J."/>
            <person name="Hayashizaki Y."/>
        </authorList>
    </citation>
    <scope>NUCLEOTIDE SEQUENCE [LARGE SCALE MRNA] (ISOFORMS 1 AND 3)</scope>
    <source>
        <strain>C57BL/6J</strain>
        <strain>NOD</strain>
        <tissue>Egg</tissue>
        <tissue>Testis</tissue>
    </source>
</reference>
<reference key="2">
    <citation type="journal article" date="2004" name="Genome Res.">
        <title>The status, quality, and expansion of the NIH full-length cDNA project: the Mammalian Gene Collection (MGC).</title>
        <authorList>
            <consortium name="The MGC Project Team"/>
        </authorList>
    </citation>
    <scope>NUCLEOTIDE SEQUENCE [LARGE SCALE MRNA] (ISOFORM 2)</scope>
    <source>
        <strain>C57BL/6J</strain>
        <tissue>Brain</tissue>
    </source>
</reference>
<reference key="3">
    <citation type="journal article" date="2003" name="DNA Res.">
        <title>Prediction of the coding sequences of mouse homologues of KIAA gene: II. The complete nucleotide sequences of 400 mouse KIAA-homologous cDNAs identified by screening of terminal sequences of cDNA clones randomly sampled from size-fractionated libraries.</title>
        <authorList>
            <person name="Okazaki N."/>
            <person name="Kikuno R."/>
            <person name="Ohara R."/>
            <person name="Inamoto S."/>
            <person name="Aizawa H."/>
            <person name="Yuasa S."/>
            <person name="Nakajima D."/>
            <person name="Nagase T."/>
            <person name="Ohara O."/>
            <person name="Koga H."/>
        </authorList>
    </citation>
    <scope>NUCLEOTIDE SEQUENCE [LARGE SCALE MRNA] OF 192-1213 (ISOFORM 4)</scope>
    <source>
        <tissue>Brain</tissue>
    </source>
</reference>
<reference key="4">
    <citation type="journal article" date="1994" name="Proc. Natl. Acad. Sci. U.S.A.">
        <title>Cloning mammalian genes by expression selection of genetic suppressor elements: association of kinesin with drug resistance and cell immortalization.</title>
        <authorList>
            <person name="Gudkov A.V."/>
            <person name="Kazarov A.R."/>
            <person name="Thimmapaya R."/>
            <person name="Axenovich S.A."/>
            <person name="Mazo I.A."/>
            <person name="Roninson I.B."/>
        </authorList>
    </citation>
    <scope>NUCLEOTIDE SEQUENCE [MRNA] OF 376-434</scope>
</reference>
<reference key="5">
    <citation type="journal article" date="2010" name="Cell">
        <title>A tissue-specific atlas of mouse protein phosphorylation and expression.</title>
        <authorList>
            <person name="Huttlin E.L."/>
            <person name="Jedrychowski M.P."/>
            <person name="Elias J.E."/>
            <person name="Goswami T."/>
            <person name="Rad R."/>
            <person name="Beausoleil S.A."/>
            <person name="Villen J."/>
            <person name="Haas W."/>
            <person name="Sowa M.E."/>
            <person name="Gygi S.P."/>
        </authorList>
    </citation>
    <scope>PHOSPHORYLATION [LARGE SCALE ANALYSIS] AT SER-84; SER-95; SER-766 AND SER-1099</scope>
    <scope>IDENTIFICATION BY MASS SPECTROMETRY [LARGE SCALE ANALYSIS]</scope>
    <source>
        <tissue>Lung</tissue>
        <tissue>Spleen</tissue>
        <tissue>Testis</tissue>
    </source>
</reference>
<gene>
    <name type="primary">Gse1</name>
    <name type="synonym">Kiaa0182</name>
</gene>
<name>GSE1_MOUSE</name>
<comment type="subunit">
    <text>May be a component of a BHC histone deacetylase complex that contains HDAC1, HDAC2, HMG20B/BRAF35, KDM1A, RCOR1/CoREST, PHF21A/BHC80, ZMYM2, ZNF217, ZMYM3, GSE1 and GTF2I.</text>
</comment>
<comment type="alternative products">
    <event type="alternative splicing"/>
    <isoform>
        <id>Q3U3C9-1</id>
        <name>1</name>
        <sequence type="displayed"/>
    </isoform>
    <isoform>
        <id>Q3U3C9-2</id>
        <name>2</name>
        <sequence type="described" ref="VSP_021823"/>
    </isoform>
    <isoform>
        <id>Q3U3C9-3</id>
        <name>3</name>
        <sequence type="described" ref="VSP_021822"/>
    </isoform>
    <isoform>
        <id>Q3U3C9-4</id>
        <name>4</name>
        <sequence type="described" ref="VSP_021824"/>
    </isoform>
</comment>
<comment type="sequence caution" evidence="7">
    <conflict type="erroneous initiation">
        <sequence resource="EMBL-CDS" id="AAH43094"/>
    </conflict>
</comment>
<comment type="sequence caution" evidence="7">
    <conflict type="frameshift">
        <sequence resource="EMBL-CDS" id="BAC28215"/>
    </conflict>
</comment>
<keyword id="KW-0007">Acetylation</keyword>
<keyword id="KW-0025">Alternative splicing</keyword>
<keyword id="KW-0175">Coiled coil</keyword>
<keyword id="KW-0488">Methylation</keyword>
<keyword id="KW-0597">Phosphoprotein</keyword>
<keyword id="KW-1185">Reference proteome</keyword>
<proteinExistence type="evidence at protein level"/>
<dbReference type="EMBL" id="AK033263">
    <property type="protein sequence ID" value="BAC28215.1"/>
    <property type="status" value="ALT_FRAME"/>
    <property type="molecule type" value="mRNA"/>
</dbReference>
<dbReference type="EMBL" id="AK136004">
    <property type="protein sequence ID" value="BAE22769.1"/>
    <property type="molecule type" value="mRNA"/>
</dbReference>
<dbReference type="EMBL" id="AK154829">
    <property type="protein sequence ID" value="BAE32859.1"/>
    <property type="molecule type" value="mRNA"/>
</dbReference>
<dbReference type="EMBL" id="BC043094">
    <property type="protein sequence ID" value="AAH43094.1"/>
    <property type="status" value="ALT_INIT"/>
    <property type="molecule type" value="mRNA"/>
</dbReference>
<dbReference type="EMBL" id="AK122216">
    <property type="protein sequence ID" value="BAC65498.1"/>
    <property type="molecule type" value="mRNA"/>
</dbReference>
<dbReference type="EMBL" id="L27155">
    <property type="status" value="NOT_ANNOTATED_CDS"/>
    <property type="molecule type" value="mRNA"/>
</dbReference>
<dbReference type="CCDS" id="CCDS52687.1">
    <molecule id="Q3U3C9-2"/>
</dbReference>
<dbReference type="CCDS" id="CCDS52688.1">
    <molecule id="Q3U3C9-1"/>
</dbReference>
<dbReference type="CCDS" id="CCDS52689.1">
    <molecule id="Q3U3C9-3"/>
</dbReference>
<dbReference type="RefSeq" id="NP_001139368.1">
    <molecule id="Q3U3C9-1"/>
    <property type="nucleotide sequence ID" value="NM_001145896.1"/>
</dbReference>
<dbReference type="RefSeq" id="NP_001139369.1">
    <molecule id="Q3U3C9-3"/>
    <property type="nucleotide sequence ID" value="NM_001145897.1"/>
</dbReference>
<dbReference type="RefSeq" id="NP_941073.2">
    <molecule id="Q3U3C9-2"/>
    <property type="nucleotide sequence ID" value="NM_198671.2"/>
</dbReference>
<dbReference type="RefSeq" id="XP_030099507.1">
    <molecule id="Q3U3C9-3"/>
    <property type="nucleotide sequence ID" value="XM_030243647.1"/>
</dbReference>
<dbReference type="RefSeq" id="XP_030099508.1">
    <molecule id="Q3U3C9-3"/>
    <property type="nucleotide sequence ID" value="XM_030243648.1"/>
</dbReference>
<dbReference type="RefSeq" id="XP_036010036.1">
    <molecule id="Q3U3C9-3"/>
    <property type="nucleotide sequence ID" value="XM_036154143.1"/>
</dbReference>
<dbReference type="RefSeq" id="XP_036010037.1">
    <molecule id="Q3U3C9-3"/>
    <property type="nucleotide sequence ID" value="XM_036154144.1"/>
</dbReference>
<dbReference type="SMR" id="Q3U3C9"/>
<dbReference type="BioGRID" id="238197">
    <property type="interactions" value="2"/>
</dbReference>
<dbReference type="FunCoup" id="Q3U3C9">
    <property type="interactions" value="131"/>
</dbReference>
<dbReference type="STRING" id="10090.ENSMUSP00000034279"/>
<dbReference type="GlyGen" id="Q3U3C9">
    <property type="glycosylation" value="7 sites, 1 N-linked glycan (1 site), 1 O-linked glycan (5 sites)"/>
</dbReference>
<dbReference type="iPTMnet" id="Q3U3C9"/>
<dbReference type="PhosphoSitePlus" id="Q3U3C9"/>
<dbReference type="jPOST" id="Q3U3C9"/>
<dbReference type="PaxDb" id="10090-ENSMUSP00000034279"/>
<dbReference type="PeptideAtlas" id="Q3U3C9"/>
<dbReference type="ProteomicsDB" id="271469">
    <molecule id="Q3U3C9-1"/>
</dbReference>
<dbReference type="ProteomicsDB" id="271470">
    <molecule id="Q3U3C9-2"/>
</dbReference>
<dbReference type="ProteomicsDB" id="271471">
    <molecule id="Q3U3C9-3"/>
</dbReference>
<dbReference type="ProteomicsDB" id="271472">
    <molecule id="Q3U3C9-4"/>
</dbReference>
<dbReference type="Antibodypedia" id="30633">
    <property type="antibodies" value="45 antibodies from 19 providers"/>
</dbReference>
<dbReference type="Ensembl" id="ENSMUST00000034279.16">
    <molecule id="Q3U3C9-2"/>
    <property type="protein sequence ID" value="ENSMUSP00000034279.9"/>
    <property type="gene ID" value="ENSMUSG00000031822.21"/>
</dbReference>
<dbReference type="Ensembl" id="ENSMUST00000118136.2">
    <molecule id="Q3U3C9-1"/>
    <property type="protein sequence ID" value="ENSMUSP00000112981.2"/>
    <property type="gene ID" value="ENSMUSG00000031822.21"/>
</dbReference>
<dbReference type="Ensembl" id="ENSMUST00000120493.8">
    <molecule id="Q3U3C9-3"/>
    <property type="protein sequence ID" value="ENSMUSP00000113577.2"/>
    <property type="gene ID" value="ENSMUSG00000031822.21"/>
</dbReference>
<dbReference type="GeneID" id="382034"/>
<dbReference type="KEGG" id="mmu:382034"/>
<dbReference type="UCSC" id="uc009nqz.2">
    <molecule id="Q3U3C9-2"/>
    <property type="organism name" value="mouse"/>
</dbReference>
<dbReference type="UCSC" id="uc009nra.2">
    <molecule id="Q3U3C9-1"/>
    <property type="organism name" value="mouse"/>
</dbReference>
<dbReference type="UCSC" id="uc009nrc.2">
    <molecule id="Q3U3C9-4"/>
    <property type="organism name" value="mouse"/>
</dbReference>
<dbReference type="AGR" id="MGI:1098275"/>
<dbReference type="CTD" id="23199"/>
<dbReference type="MGI" id="MGI:1098275">
    <property type="gene designation" value="Gse1"/>
</dbReference>
<dbReference type="VEuPathDB" id="HostDB:ENSMUSG00000031822"/>
<dbReference type="eggNOG" id="ENOG502QR0Q">
    <property type="taxonomic scope" value="Eukaryota"/>
</dbReference>
<dbReference type="GeneTree" id="ENSGT00700000104539"/>
<dbReference type="HOGENOM" id="CLU_009387_0_0_1"/>
<dbReference type="InParanoid" id="Q3U3C9"/>
<dbReference type="OMA" id="IKAMEGP"/>
<dbReference type="OrthoDB" id="77911at9989"/>
<dbReference type="PhylomeDB" id="Q3U3C9"/>
<dbReference type="TreeFam" id="TF332496"/>
<dbReference type="BioGRID-ORCS" id="382034">
    <property type="hits" value="11 hits in 80 CRISPR screens"/>
</dbReference>
<dbReference type="ChiTaRS" id="Gse1">
    <property type="organism name" value="mouse"/>
</dbReference>
<dbReference type="PRO" id="PR:Q3U3C9"/>
<dbReference type="Proteomes" id="UP000000589">
    <property type="component" value="Chromosome 8"/>
</dbReference>
<dbReference type="RNAct" id="Q3U3C9">
    <property type="molecule type" value="protein"/>
</dbReference>
<dbReference type="Bgee" id="ENSMUSG00000031822">
    <property type="expression patterns" value="Expressed in animal zygote and 220 other cell types or tissues"/>
</dbReference>
<dbReference type="ExpressionAtlas" id="Q3U3C9">
    <property type="expression patterns" value="baseline and differential"/>
</dbReference>
<dbReference type="GO" id="GO:0010467">
    <property type="term" value="P:gene expression"/>
    <property type="evidence" value="ECO:0000315"/>
    <property type="project" value="MGI"/>
</dbReference>
<dbReference type="GO" id="GO:0001701">
    <property type="term" value="P:in utero embryonic development"/>
    <property type="evidence" value="ECO:0000315"/>
    <property type="project" value="MGI"/>
</dbReference>
<dbReference type="GO" id="GO:0001890">
    <property type="term" value="P:placenta development"/>
    <property type="evidence" value="ECO:0000315"/>
    <property type="project" value="MGI"/>
</dbReference>
<dbReference type="InterPro" id="IPR022207">
    <property type="entry name" value="GSE-like"/>
</dbReference>
<dbReference type="InterPro" id="IPR042337">
    <property type="entry name" value="GSE1"/>
</dbReference>
<dbReference type="PANTHER" id="PTHR17608">
    <property type="entry name" value="GENETIC SUPPRESSOR ELEMENT 1"/>
    <property type="match status" value="1"/>
</dbReference>
<dbReference type="PANTHER" id="PTHR17608:SF4">
    <property type="entry name" value="GENETIC SUPPRESSOR ELEMENT 1"/>
    <property type="match status" value="1"/>
</dbReference>
<dbReference type="Pfam" id="PF12540">
    <property type="entry name" value="DUF3736"/>
    <property type="match status" value="1"/>
</dbReference>
<feature type="chain" id="PRO_0000262925" description="Genetic suppressor element 1">
    <location>
        <begin position="1"/>
        <end position="1213"/>
    </location>
</feature>
<feature type="region of interest" description="Disordered" evidence="3">
    <location>
        <begin position="1"/>
        <end position="154"/>
    </location>
</feature>
<feature type="region of interest" description="Disordered" evidence="3">
    <location>
        <begin position="326"/>
        <end position="384"/>
    </location>
</feature>
<feature type="region of interest" description="Disordered" evidence="3">
    <location>
        <begin position="527"/>
        <end position="579"/>
    </location>
</feature>
<feature type="region of interest" description="Disordered" evidence="3">
    <location>
        <begin position="630"/>
        <end position="719"/>
    </location>
</feature>
<feature type="region of interest" description="Disordered" evidence="3">
    <location>
        <begin position="816"/>
        <end position="858"/>
    </location>
</feature>
<feature type="region of interest" description="Disordered" evidence="3">
    <location>
        <begin position="898"/>
        <end position="979"/>
    </location>
</feature>
<feature type="region of interest" description="Disordered" evidence="3">
    <location>
        <begin position="1065"/>
        <end position="1118"/>
    </location>
</feature>
<feature type="coiled-coil region" evidence="2">
    <location>
        <begin position="319"/>
        <end position="402"/>
    </location>
</feature>
<feature type="coiled-coil region" evidence="2">
    <location>
        <begin position="1093"/>
        <end position="1197"/>
    </location>
</feature>
<feature type="compositionally biased region" description="Polar residues" evidence="3">
    <location>
        <begin position="15"/>
        <end position="33"/>
    </location>
</feature>
<feature type="compositionally biased region" description="Low complexity" evidence="3">
    <location>
        <begin position="51"/>
        <end position="63"/>
    </location>
</feature>
<feature type="compositionally biased region" description="Low complexity" evidence="3">
    <location>
        <begin position="76"/>
        <end position="89"/>
    </location>
</feature>
<feature type="compositionally biased region" description="Low complexity" evidence="3">
    <location>
        <begin position="103"/>
        <end position="114"/>
    </location>
</feature>
<feature type="compositionally biased region" description="Basic and acidic residues" evidence="3">
    <location>
        <begin position="331"/>
        <end position="384"/>
    </location>
</feature>
<feature type="compositionally biased region" description="Basic and acidic residues" evidence="3">
    <location>
        <begin position="537"/>
        <end position="560"/>
    </location>
</feature>
<feature type="compositionally biased region" description="Basic and acidic residues" evidence="3">
    <location>
        <begin position="630"/>
        <end position="643"/>
    </location>
</feature>
<feature type="compositionally biased region" description="Pro residues" evidence="3">
    <location>
        <begin position="648"/>
        <end position="657"/>
    </location>
</feature>
<feature type="compositionally biased region" description="Polar residues" evidence="3">
    <location>
        <begin position="681"/>
        <end position="700"/>
    </location>
</feature>
<feature type="compositionally biased region" description="Polar residues" evidence="3">
    <location>
        <begin position="847"/>
        <end position="858"/>
    </location>
</feature>
<feature type="compositionally biased region" description="Polar residues" evidence="3">
    <location>
        <begin position="1065"/>
        <end position="1081"/>
    </location>
</feature>
<feature type="compositionally biased region" description="Acidic residues" evidence="3">
    <location>
        <begin position="1095"/>
        <end position="1112"/>
    </location>
</feature>
<feature type="modified residue" description="Phosphoserine" evidence="1">
    <location>
        <position position="10"/>
    </location>
</feature>
<feature type="modified residue" description="Phosphoserine" evidence="8">
    <location>
        <position position="84"/>
    </location>
</feature>
<feature type="modified residue" description="Phosphoserine" evidence="8">
    <location>
        <position position="95"/>
    </location>
</feature>
<feature type="modified residue" description="Asymmetric dimethylarginine" evidence="1">
    <location>
        <position position="305"/>
    </location>
</feature>
<feature type="modified residue" description="Phosphothreonine" evidence="1">
    <location>
        <position position="433"/>
    </location>
</feature>
<feature type="modified residue" description="N6-acetyllysine" evidence="1">
    <location>
        <position position="496"/>
    </location>
</feature>
<feature type="modified residue" description="N6-acetyllysine" evidence="1">
    <location>
        <position position="739"/>
    </location>
</feature>
<feature type="modified residue" description="Phosphoserine" evidence="8">
    <location>
        <position position="766"/>
    </location>
</feature>
<feature type="modified residue" description="Phosphoserine" evidence="1">
    <location>
        <position position="826"/>
    </location>
</feature>
<feature type="modified residue" description="Phosphoserine" evidence="1">
    <location>
        <position position="828"/>
    </location>
</feature>
<feature type="modified residue" description="Phosphoserine" evidence="1">
    <location>
        <position position="857"/>
    </location>
</feature>
<feature type="modified residue" description="Phosphothreonine" evidence="1">
    <location>
        <position position="905"/>
    </location>
</feature>
<feature type="modified residue" description="Phosphoserine" evidence="1">
    <location>
        <position position="907"/>
    </location>
</feature>
<feature type="modified residue" description="Phosphoserine" evidence="8">
    <location>
        <position position="1099"/>
    </location>
</feature>
<feature type="splice variant" id="VSP_021822" description="In isoform 3." evidence="6">
    <location>
        <begin position="1"/>
        <end position="3"/>
    </location>
</feature>
<feature type="splice variant" id="VSP_021823" description="In isoform 2." evidence="5">
    <original>MK</original>
    <variation>MFGLKPPLYYLP</variation>
    <location>
        <begin position="1"/>
        <end position="2"/>
    </location>
</feature>
<feature type="splice variant" id="VSP_021824" description="In isoform 4." evidence="4">
    <location>
        <begin position="882"/>
        <end position="917"/>
    </location>
</feature>
<feature type="sequence conflict" description="In Ref. 1; BAE32859." evidence="7" ref="1">
    <original>T</original>
    <variation>A</variation>
    <location>
        <position position="22"/>
    </location>
</feature>
<feature type="sequence conflict" description="In Ref. 1; BAE32859." evidence="7" ref="1">
    <location>
        <position position="57"/>
    </location>
</feature>
<feature type="sequence conflict" description="In Ref. 1; BAE32859." evidence="7" ref="1">
    <original>H</original>
    <variation>R</variation>
    <location>
        <position position="300"/>
    </location>
</feature>
<feature type="sequence conflict" description="In Ref. 1; BAE32859." evidence="7" ref="1">
    <original>E</original>
    <variation>K</variation>
    <location>
        <position position="509"/>
    </location>
</feature>
<feature type="sequence conflict" description="In Ref. 1; BAE32859." evidence="7" ref="1">
    <original>R</original>
    <variation>W</variation>
    <location>
        <position position="531"/>
    </location>
</feature>
<evidence type="ECO:0000250" key="1">
    <source>
        <dbReference type="UniProtKB" id="Q14687"/>
    </source>
</evidence>
<evidence type="ECO:0000255" key="2"/>
<evidence type="ECO:0000256" key="3">
    <source>
        <dbReference type="SAM" id="MobiDB-lite"/>
    </source>
</evidence>
<evidence type="ECO:0000303" key="4">
    <source>
    </source>
</evidence>
<evidence type="ECO:0000303" key="5">
    <source>
    </source>
</evidence>
<evidence type="ECO:0000303" key="6">
    <source>
    </source>
</evidence>
<evidence type="ECO:0000305" key="7"/>
<evidence type="ECO:0007744" key="8">
    <source>
    </source>
</evidence>